<dbReference type="EMBL" id="AY653733">
    <property type="protein sequence ID" value="AAV50483.1"/>
    <property type="molecule type" value="Genomic_DNA"/>
</dbReference>
<dbReference type="KEGG" id="vg:9924817"/>
<dbReference type="OrthoDB" id="12460at10239"/>
<dbReference type="Proteomes" id="UP000001134">
    <property type="component" value="Genome"/>
</dbReference>
<organismHost>
    <name type="scientific">Acanthamoeba polyphaga</name>
    <name type="common">Amoeba</name>
    <dbReference type="NCBI Taxonomy" id="5757"/>
</organismHost>
<gene>
    <name type="ordered locus">MIMI_R210</name>
</gene>
<organism>
    <name type="scientific">Acanthamoeba polyphaga mimivirus</name>
    <name type="common">APMV</name>
    <dbReference type="NCBI Taxonomy" id="212035"/>
    <lineage>
        <taxon>Viruses</taxon>
        <taxon>Varidnaviria</taxon>
        <taxon>Bamfordvirae</taxon>
        <taxon>Nucleocytoviricota</taxon>
        <taxon>Megaviricetes</taxon>
        <taxon>Imitervirales</taxon>
        <taxon>Mimiviridae</taxon>
        <taxon>Megamimivirinae</taxon>
        <taxon>Mimivirus</taxon>
        <taxon>Mimivirus bradfordmassiliense</taxon>
    </lineage>
</organism>
<name>YR210_MIMIV</name>
<reference key="1">
    <citation type="journal article" date="2004" name="Science">
        <title>The 1.2-megabase genome sequence of Mimivirus.</title>
        <authorList>
            <person name="Raoult D."/>
            <person name="Audic S."/>
            <person name="Robert C."/>
            <person name="Abergel C."/>
            <person name="Renesto P."/>
            <person name="Ogata H."/>
            <person name="La Scola B."/>
            <person name="Susan M."/>
            <person name="Claverie J.-M."/>
        </authorList>
    </citation>
    <scope>NUCLEOTIDE SEQUENCE [LARGE SCALE GENOMIC DNA]</scope>
    <source>
        <strain>Rowbotham-Bradford</strain>
    </source>
</reference>
<proteinExistence type="predicted"/>
<protein>
    <recommendedName>
        <fullName>Uncharacterized protein R210</fullName>
    </recommendedName>
</protein>
<accession>Q5UQ31</accession>
<keyword id="KW-1185">Reference proteome</keyword>
<sequence>MNLSLLTKSSCEKIIDLDFPKNIETIVSNNLSALVDNMLIASKKQINLTHYEPDIYLLKNVFINFDENLNNVFDSKFQHDVKLMTEVYGFKMNINDQIININILTTNNKKGYVVALIHAINTFCHMFPYEYHGLTMYICLDDNTRNIDFDPSNYSLDDMFKRLHKESGAFNVSGMTQRSSKKIVLTKSEEIVKLMFHEMVHYIGLDQKLLSINKSYNWNLINQRLNISEAYTEFLSVLLNSSYEAIYFMVSTDSNVHNTFQKILSKETTYSVWLSSYILKLYGYNSHNLHEFFSGQNLQPKYSPIPSWEYIILRTQLLLNINEMNEFFPENLKINNLNLDKFLSLIEINNDFIELIKSFIFSITNLRKNISYNLIDINWNCLLV</sequence>
<feature type="chain" id="PRO_0000248621" description="Uncharacterized protein R210">
    <location>
        <begin position="1"/>
        <end position="384"/>
    </location>
</feature>